<organism>
    <name type="scientific">Janthinobacterium sp. (strain Marseille)</name>
    <name type="common">Minibacterium massiliensis</name>
    <dbReference type="NCBI Taxonomy" id="375286"/>
    <lineage>
        <taxon>Bacteria</taxon>
        <taxon>Pseudomonadati</taxon>
        <taxon>Pseudomonadota</taxon>
        <taxon>Betaproteobacteria</taxon>
        <taxon>Burkholderiales</taxon>
        <taxon>Oxalobacteraceae</taxon>
        <taxon>Janthinobacterium</taxon>
    </lineage>
</organism>
<gene>
    <name evidence="1" type="primary">ureE</name>
    <name type="ordered locus">mma_1815</name>
</gene>
<name>UREE_JANMA</name>
<reference key="1">
    <citation type="journal article" date="2007" name="PLoS Genet.">
        <title>Genome analysis of Minibacterium massiliensis highlights the convergent evolution of water-living bacteria.</title>
        <authorList>
            <person name="Audic S."/>
            <person name="Robert C."/>
            <person name="Campagna B."/>
            <person name="Parinello H."/>
            <person name="Claverie J.-M."/>
            <person name="Raoult D."/>
            <person name="Drancourt M."/>
        </authorList>
    </citation>
    <scope>NUCLEOTIDE SEQUENCE [LARGE SCALE GENOMIC DNA]</scope>
    <source>
        <strain>Marseille</strain>
    </source>
</reference>
<accession>A6SZ08</accession>
<keyword id="KW-0143">Chaperone</keyword>
<keyword id="KW-0963">Cytoplasm</keyword>
<keyword id="KW-0533">Nickel</keyword>
<keyword id="KW-0996">Nickel insertion</keyword>
<proteinExistence type="inferred from homology"/>
<sequence length="170" mass="18864">MLTLNTKLEKADQIDGELILPYDQREKSRLRATMVSGEDVAVFTVRGTILRDGDILRGDDGRIVKITAAKEPTYRVEALSPHQLLRCAFHLGNRHTQAQIGNGFLRIRKDAVLKEMLEGLGAKVEEELAAFEPESGAYGGGHHHHGDDGHHPLAPIPLRQKIHRPSDKAE</sequence>
<feature type="chain" id="PRO_1000083893" description="Urease accessory protein UreE">
    <location>
        <begin position="1"/>
        <end position="170"/>
    </location>
</feature>
<feature type="region of interest" description="Disordered" evidence="2">
    <location>
        <begin position="134"/>
        <end position="170"/>
    </location>
</feature>
<comment type="function">
    <text evidence="1">Involved in urease metallocenter assembly. Binds nickel. Probably functions as a nickel donor during metallocenter assembly.</text>
</comment>
<comment type="subcellular location">
    <subcellularLocation>
        <location evidence="1">Cytoplasm</location>
    </subcellularLocation>
</comment>
<comment type="similarity">
    <text evidence="1">Belongs to the UreE family.</text>
</comment>
<evidence type="ECO:0000255" key="1">
    <source>
        <dbReference type="HAMAP-Rule" id="MF_00822"/>
    </source>
</evidence>
<evidence type="ECO:0000256" key="2">
    <source>
        <dbReference type="SAM" id="MobiDB-lite"/>
    </source>
</evidence>
<protein>
    <recommendedName>
        <fullName evidence="1">Urease accessory protein UreE</fullName>
    </recommendedName>
</protein>
<dbReference type="EMBL" id="CP000269">
    <property type="protein sequence ID" value="ABR90181.1"/>
    <property type="molecule type" value="Genomic_DNA"/>
</dbReference>
<dbReference type="RefSeq" id="WP_012079668.1">
    <property type="nucleotide sequence ID" value="NC_009659.1"/>
</dbReference>
<dbReference type="SMR" id="A6SZ08"/>
<dbReference type="STRING" id="375286.mma_1815"/>
<dbReference type="KEGG" id="mms:mma_1815"/>
<dbReference type="eggNOG" id="COG2371">
    <property type="taxonomic scope" value="Bacteria"/>
</dbReference>
<dbReference type="HOGENOM" id="CLU_093757_2_0_4"/>
<dbReference type="OrthoDB" id="5421304at2"/>
<dbReference type="Proteomes" id="UP000006388">
    <property type="component" value="Chromosome"/>
</dbReference>
<dbReference type="GO" id="GO:0005737">
    <property type="term" value="C:cytoplasm"/>
    <property type="evidence" value="ECO:0007669"/>
    <property type="project" value="UniProtKB-SubCell"/>
</dbReference>
<dbReference type="GO" id="GO:0016151">
    <property type="term" value="F:nickel cation binding"/>
    <property type="evidence" value="ECO:0007669"/>
    <property type="project" value="UniProtKB-UniRule"/>
</dbReference>
<dbReference type="GO" id="GO:0051082">
    <property type="term" value="F:unfolded protein binding"/>
    <property type="evidence" value="ECO:0007669"/>
    <property type="project" value="UniProtKB-UniRule"/>
</dbReference>
<dbReference type="GO" id="GO:0006457">
    <property type="term" value="P:protein folding"/>
    <property type="evidence" value="ECO:0007669"/>
    <property type="project" value="InterPro"/>
</dbReference>
<dbReference type="GO" id="GO:0065003">
    <property type="term" value="P:protein-containing complex assembly"/>
    <property type="evidence" value="ECO:0007669"/>
    <property type="project" value="InterPro"/>
</dbReference>
<dbReference type="GO" id="GO:0019627">
    <property type="term" value="P:urea metabolic process"/>
    <property type="evidence" value="ECO:0007669"/>
    <property type="project" value="InterPro"/>
</dbReference>
<dbReference type="CDD" id="cd00571">
    <property type="entry name" value="UreE"/>
    <property type="match status" value="1"/>
</dbReference>
<dbReference type="Gene3D" id="2.60.260.20">
    <property type="entry name" value="Urease metallochaperone UreE, N-terminal domain"/>
    <property type="match status" value="1"/>
</dbReference>
<dbReference type="Gene3D" id="3.30.70.790">
    <property type="entry name" value="UreE, C-terminal domain"/>
    <property type="match status" value="1"/>
</dbReference>
<dbReference type="HAMAP" id="MF_00822">
    <property type="entry name" value="UreE"/>
    <property type="match status" value="1"/>
</dbReference>
<dbReference type="InterPro" id="IPR012406">
    <property type="entry name" value="UreE"/>
</dbReference>
<dbReference type="InterPro" id="IPR007864">
    <property type="entry name" value="UreE_C_dom"/>
</dbReference>
<dbReference type="InterPro" id="IPR004029">
    <property type="entry name" value="UreE_N"/>
</dbReference>
<dbReference type="InterPro" id="IPR036118">
    <property type="entry name" value="UreE_N_sf"/>
</dbReference>
<dbReference type="NCBIfam" id="NF009751">
    <property type="entry name" value="PRK13261.1-1"/>
    <property type="match status" value="1"/>
</dbReference>
<dbReference type="Pfam" id="PF05194">
    <property type="entry name" value="UreE_C"/>
    <property type="match status" value="1"/>
</dbReference>
<dbReference type="Pfam" id="PF02814">
    <property type="entry name" value="UreE_N"/>
    <property type="match status" value="1"/>
</dbReference>
<dbReference type="SMART" id="SM00988">
    <property type="entry name" value="UreE_N"/>
    <property type="match status" value="1"/>
</dbReference>
<dbReference type="SUPFAM" id="SSF69737">
    <property type="entry name" value="Urease metallochaperone UreE, C-terminal domain"/>
    <property type="match status" value="1"/>
</dbReference>
<dbReference type="SUPFAM" id="SSF69287">
    <property type="entry name" value="Urease metallochaperone UreE, N-terminal domain"/>
    <property type="match status" value="1"/>
</dbReference>